<sequence>MKQFIDFIPLLLFFIVYKTEPRAVDILGNTYMVGGIFSATAMLIISSVVVYGILYLKQRKLEKSQWLTLVACLVFGSLTLAFHSETFLKWKAPVVNWLFAVAFAGSHFIGDRPIIQRIMGHALTLPAAIWTRLNIAWIVFFLFCGAANLYVAFTYQEFWVDFKVFGSLGMTLIFLVGQGIYLSRHLHDTAPNTTKSED</sequence>
<name>YCIB_PSE14</name>
<feature type="chain" id="PRO_1000021041" description="Inner membrane-spanning protein YciB">
    <location>
        <begin position="1"/>
        <end position="198"/>
    </location>
</feature>
<feature type="transmembrane region" description="Helical" evidence="1">
    <location>
        <begin position="36"/>
        <end position="56"/>
    </location>
</feature>
<feature type="transmembrane region" description="Helical" evidence="1">
    <location>
        <begin position="67"/>
        <end position="87"/>
    </location>
</feature>
<feature type="transmembrane region" description="Helical" evidence="1">
    <location>
        <begin position="90"/>
        <end position="110"/>
    </location>
</feature>
<feature type="transmembrane region" description="Helical" evidence="1">
    <location>
        <begin position="133"/>
        <end position="153"/>
    </location>
</feature>
<feature type="transmembrane region" description="Helical" evidence="1">
    <location>
        <begin position="162"/>
        <end position="182"/>
    </location>
</feature>
<protein>
    <recommendedName>
        <fullName evidence="1">Inner membrane-spanning protein YciB</fullName>
    </recommendedName>
</protein>
<gene>
    <name evidence="1" type="primary">yciB</name>
    <name type="ordered locus">PSPPH_3544</name>
</gene>
<keyword id="KW-0997">Cell inner membrane</keyword>
<keyword id="KW-1003">Cell membrane</keyword>
<keyword id="KW-0472">Membrane</keyword>
<keyword id="KW-0812">Transmembrane</keyword>
<keyword id="KW-1133">Transmembrane helix</keyword>
<reference key="1">
    <citation type="journal article" date="2005" name="J. Bacteriol.">
        <title>Whole-genome sequence analysis of Pseudomonas syringae pv. phaseolicola 1448A reveals divergence among pathovars in genes involved in virulence and transposition.</title>
        <authorList>
            <person name="Joardar V."/>
            <person name="Lindeberg M."/>
            <person name="Jackson R.W."/>
            <person name="Selengut J."/>
            <person name="Dodson R."/>
            <person name="Brinkac L.M."/>
            <person name="Daugherty S.C."/>
            <person name="DeBoy R.T."/>
            <person name="Durkin A.S."/>
            <person name="Gwinn Giglio M."/>
            <person name="Madupu R."/>
            <person name="Nelson W.C."/>
            <person name="Rosovitz M.J."/>
            <person name="Sullivan S.A."/>
            <person name="Crabtree J."/>
            <person name="Creasy T."/>
            <person name="Davidsen T.M."/>
            <person name="Haft D.H."/>
            <person name="Zafar N."/>
            <person name="Zhou L."/>
            <person name="Halpin R."/>
            <person name="Holley T."/>
            <person name="Khouri H.M."/>
            <person name="Feldblyum T.V."/>
            <person name="White O."/>
            <person name="Fraser C.M."/>
            <person name="Chatterjee A.K."/>
            <person name="Cartinhour S."/>
            <person name="Schneider D."/>
            <person name="Mansfield J.W."/>
            <person name="Collmer A."/>
            <person name="Buell R."/>
        </authorList>
    </citation>
    <scope>NUCLEOTIDE SEQUENCE [LARGE SCALE GENOMIC DNA]</scope>
    <source>
        <strain>1448A / Race 6</strain>
    </source>
</reference>
<dbReference type="EMBL" id="CP000058">
    <property type="protein sequence ID" value="AAZ36659.1"/>
    <property type="molecule type" value="Genomic_DNA"/>
</dbReference>
<dbReference type="RefSeq" id="WP_011169169.1">
    <property type="nucleotide sequence ID" value="NC_005773.3"/>
</dbReference>
<dbReference type="KEGG" id="psp:PSPPH_3544"/>
<dbReference type="eggNOG" id="COG2917">
    <property type="taxonomic scope" value="Bacteria"/>
</dbReference>
<dbReference type="HOGENOM" id="CLU_089554_2_0_6"/>
<dbReference type="Proteomes" id="UP000000551">
    <property type="component" value="Chromosome"/>
</dbReference>
<dbReference type="GO" id="GO:0005886">
    <property type="term" value="C:plasma membrane"/>
    <property type="evidence" value="ECO:0007669"/>
    <property type="project" value="UniProtKB-SubCell"/>
</dbReference>
<dbReference type="HAMAP" id="MF_00189">
    <property type="entry name" value="YciB"/>
    <property type="match status" value="1"/>
</dbReference>
<dbReference type="InterPro" id="IPR006008">
    <property type="entry name" value="YciB"/>
</dbReference>
<dbReference type="NCBIfam" id="TIGR00997">
    <property type="entry name" value="ispZ"/>
    <property type="match status" value="1"/>
</dbReference>
<dbReference type="NCBIfam" id="NF001325">
    <property type="entry name" value="PRK00259.1-3"/>
    <property type="match status" value="1"/>
</dbReference>
<dbReference type="NCBIfam" id="NF001327">
    <property type="entry name" value="PRK00259.1-5"/>
    <property type="match status" value="1"/>
</dbReference>
<dbReference type="PANTHER" id="PTHR36917:SF1">
    <property type="entry name" value="INNER MEMBRANE-SPANNING PROTEIN YCIB"/>
    <property type="match status" value="1"/>
</dbReference>
<dbReference type="PANTHER" id="PTHR36917">
    <property type="entry name" value="INTRACELLULAR SEPTATION PROTEIN A-RELATED"/>
    <property type="match status" value="1"/>
</dbReference>
<dbReference type="Pfam" id="PF04279">
    <property type="entry name" value="IspA"/>
    <property type="match status" value="1"/>
</dbReference>
<accession>Q48FZ3</accession>
<proteinExistence type="inferred from homology"/>
<organism>
    <name type="scientific">Pseudomonas savastanoi pv. phaseolicola (strain 1448A / Race 6)</name>
    <name type="common">Pseudomonas syringae pv. phaseolicola (strain 1448A / Race 6)</name>
    <dbReference type="NCBI Taxonomy" id="264730"/>
    <lineage>
        <taxon>Bacteria</taxon>
        <taxon>Pseudomonadati</taxon>
        <taxon>Pseudomonadota</taxon>
        <taxon>Gammaproteobacteria</taxon>
        <taxon>Pseudomonadales</taxon>
        <taxon>Pseudomonadaceae</taxon>
        <taxon>Pseudomonas</taxon>
    </lineage>
</organism>
<comment type="function">
    <text evidence="1">Plays a role in cell envelope biogenesis, maintenance of cell envelope integrity and membrane homeostasis.</text>
</comment>
<comment type="subcellular location">
    <subcellularLocation>
        <location evidence="1">Cell inner membrane</location>
        <topology evidence="1">Multi-pass membrane protein</topology>
    </subcellularLocation>
</comment>
<comment type="similarity">
    <text evidence="1">Belongs to the YciB family.</text>
</comment>
<evidence type="ECO:0000255" key="1">
    <source>
        <dbReference type="HAMAP-Rule" id="MF_00189"/>
    </source>
</evidence>